<protein>
    <recommendedName>
        <fullName evidence="1">Large ribosomal subunit protein uL18</fullName>
    </recommendedName>
    <alternativeName>
        <fullName evidence="2">50S ribosomal protein L18</fullName>
    </alternativeName>
</protein>
<organism>
    <name type="scientific">Roseobacter denitrificans (strain ATCC 33942 / OCh 114)</name>
    <name type="common">Erythrobacter sp. (strain OCh 114)</name>
    <name type="synonym">Roseobacter denitrificans</name>
    <dbReference type="NCBI Taxonomy" id="375451"/>
    <lineage>
        <taxon>Bacteria</taxon>
        <taxon>Pseudomonadati</taxon>
        <taxon>Pseudomonadota</taxon>
        <taxon>Alphaproteobacteria</taxon>
        <taxon>Rhodobacterales</taxon>
        <taxon>Roseobacteraceae</taxon>
        <taxon>Roseobacter</taxon>
    </lineage>
</organism>
<reference key="1">
    <citation type="journal article" date="2007" name="J. Bacteriol.">
        <title>The complete genome sequence of Roseobacter denitrificans reveals a mixotrophic rather than photosynthetic metabolism.</title>
        <authorList>
            <person name="Swingley W.D."/>
            <person name="Sadekar S."/>
            <person name="Mastrian S.D."/>
            <person name="Matthies H.J."/>
            <person name="Hao J."/>
            <person name="Ramos H."/>
            <person name="Acharya C.R."/>
            <person name="Conrad A.L."/>
            <person name="Taylor H.L."/>
            <person name="Dejesa L.C."/>
            <person name="Shah M.K."/>
            <person name="O'Huallachain M.E."/>
            <person name="Lince M.T."/>
            <person name="Blankenship R.E."/>
            <person name="Beatty J.T."/>
            <person name="Touchman J.W."/>
        </authorList>
    </citation>
    <scope>NUCLEOTIDE SEQUENCE [LARGE SCALE GENOMIC DNA]</scope>
    <source>
        <strain>ATCC 33942 / OCh 114</strain>
    </source>
</reference>
<sequence length="119" mass="12853">MANSKRQLFIKRRLRVRNKLRKVNAGRVRLSVHRSNKNISVQLIDDVAGKTLASASTLEKDLGVVGKNNIEAAAKVGAAIAERAKKAGVSEAYFDRGGFLFHGKVKAVAEAAREGGLKI</sequence>
<dbReference type="EMBL" id="CP000362">
    <property type="protein sequence ID" value="ABG31065.1"/>
    <property type="molecule type" value="Genomic_DNA"/>
</dbReference>
<dbReference type="RefSeq" id="WP_011567685.1">
    <property type="nucleotide sequence ID" value="NC_008209.1"/>
</dbReference>
<dbReference type="SMR" id="Q16AC8"/>
<dbReference type="STRING" id="375451.RD1_1426"/>
<dbReference type="KEGG" id="rde:RD1_1426"/>
<dbReference type="eggNOG" id="COG0256">
    <property type="taxonomic scope" value="Bacteria"/>
</dbReference>
<dbReference type="HOGENOM" id="CLU_098841_0_1_5"/>
<dbReference type="OrthoDB" id="9810939at2"/>
<dbReference type="Proteomes" id="UP000007029">
    <property type="component" value="Chromosome"/>
</dbReference>
<dbReference type="GO" id="GO:0022625">
    <property type="term" value="C:cytosolic large ribosomal subunit"/>
    <property type="evidence" value="ECO:0007669"/>
    <property type="project" value="TreeGrafter"/>
</dbReference>
<dbReference type="GO" id="GO:0008097">
    <property type="term" value="F:5S rRNA binding"/>
    <property type="evidence" value="ECO:0007669"/>
    <property type="project" value="TreeGrafter"/>
</dbReference>
<dbReference type="GO" id="GO:0003735">
    <property type="term" value="F:structural constituent of ribosome"/>
    <property type="evidence" value="ECO:0007669"/>
    <property type="project" value="InterPro"/>
</dbReference>
<dbReference type="GO" id="GO:0006412">
    <property type="term" value="P:translation"/>
    <property type="evidence" value="ECO:0007669"/>
    <property type="project" value="UniProtKB-UniRule"/>
</dbReference>
<dbReference type="CDD" id="cd00432">
    <property type="entry name" value="Ribosomal_L18_L5e"/>
    <property type="match status" value="1"/>
</dbReference>
<dbReference type="FunFam" id="3.30.420.100:FF:000001">
    <property type="entry name" value="50S ribosomal protein L18"/>
    <property type="match status" value="1"/>
</dbReference>
<dbReference type="Gene3D" id="3.30.420.100">
    <property type="match status" value="1"/>
</dbReference>
<dbReference type="HAMAP" id="MF_01337_B">
    <property type="entry name" value="Ribosomal_uL18_B"/>
    <property type="match status" value="1"/>
</dbReference>
<dbReference type="InterPro" id="IPR004389">
    <property type="entry name" value="Ribosomal_uL18_bac-type"/>
</dbReference>
<dbReference type="InterPro" id="IPR005484">
    <property type="entry name" value="Ribosomal_uL18_bac/euk"/>
</dbReference>
<dbReference type="NCBIfam" id="TIGR00060">
    <property type="entry name" value="L18_bact"/>
    <property type="match status" value="1"/>
</dbReference>
<dbReference type="PANTHER" id="PTHR12899">
    <property type="entry name" value="39S RIBOSOMAL PROTEIN L18, MITOCHONDRIAL"/>
    <property type="match status" value="1"/>
</dbReference>
<dbReference type="PANTHER" id="PTHR12899:SF3">
    <property type="entry name" value="LARGE RIBOSOMAL SUBUNIT PROTEIN UL18M"/>
    <property type="match status" value="1"/>
</dbReference>
<dbReference type="Pfam" id="PF00861">
    <property type="entry name" value="Ribosomal_L18p"/>
    <property type="match status" value="1"/>
</dbReference>
<dbReference type="SUPFAM" id="SSF53137">
    <property type="entry name" value="Translational machinery components"/>
    <property type="match status" value="1"/>
</dbReference>
<feature type="chain" id="PRO_0000251363" description="Large ribosomal subunit protein uL18">
    <location>
        <begin position="1"/>
        <end position="119"/>
    </location>
</feature>
<comment type="function">
    <text evidence="1">This is one of the proteins that bind and probably mediate the attachment of the 5S RNA into the large ribosomal subunit, where it forms part of the central protuberance.</text>
</comment>
<comment type="subunit">
    <text evidence="1">Part of the 50S ribosomal subunit; part of the 5S rRNA/L5/L18/L25 subcomplex. Contacts the 5S and 23S rRNAs.</text>
</comment>
<comment type="similarity">
    <text evidence="1">Belongs to the universal ribosomal protein uL18 family.</text>
</comment>
<evidence type="ECO:0000255" key="1">
    <source>
        <dbReference type="HAMAP-Rule" id="MF_01337"/>
    </source>
</evidence>
<evidence type="ECO:0000305" key="2"/>
<name>RL18_ROSDO</name>
<gene>
    <name evidence="1" type="primary">rplR</name>
    <name type="ordered locus">RD1_1426</name>
</gene>
<proteinExistence type="inferred from homology"/>
<accession>Q16AC8</accession>
<keyword id="KW-1185">Reference proteome</keyword>
<keyword id="KW-0687">Ribonucleoprotein</keyword>
<keyword id="KW-0689">Ribosomal protein</keyword>
<keyword id="KW-0694">RNA-binding</keyword>
<keyword id="KW-0699">rRNA-binding</keyword>